<feature type="chain" id="PRO_1000088096" description="Arsenate reductase">
    <location>
        <begin position="1"/>
        <end position="131"/>
    </location>
</feature>
<feature type="active site" description="Nucleophile" evidence="1">
    <location>
        <position position="10"/>
    </location>
</feature>
<feature type="active site" description="Nucleophile" evidence="1">
    <location>
        <position position="82"/>
    </location>
</feature>
<feature type="active site" description="Nucleophile" evidence="1">
    <location>
        <position position="89"/>
    </location>
</feature>
<feature type="disulfide bond" description="Redox-active; alternate" evidence="1">
    <location>
        <begin position="10"/>
        <end position="82"/>
    </location>
</feature>
<feature type="disulfide bond" description="Redox-active; alternate" evidence="1">
    <location>
        <begin position="82"/>
        <end position="89"/>
    </location>
</feature>
<dbReference type="EC" id="1.20.4.4" evidence="1"/>
<dbReference type="EMBL" id="CP000730">
    <property type="protein sequence ID" value="ABX29770.1"/>
    <property type="molecule type" value="Genomic_DNA"/>
</dbReference>
<dbReference type="RefSeq" id="WP_000163235.1">
    <property type="nucleotide sequence ID" value="NC_010079.1"/>
</dbReference>
<dbReference type="SMR" id="A8Z4K0"/>
<dbReference type="KEGG" id="sax:USA300HOU_1764"/>
<dbReference type="HOGENOM" id="CLU_071415_3_2_9"/>
<dbReference type="GO" id="GO:0005737">
    <property type="term" value="C:cytoplasm"/>
    <property type="evidence" value="ECO:0007669"/>
    <property type="project" value="UniProtKB-SubCell"/>
</dbReference>
<dbReference type="GO" id="GO:0030612">
    <property type="term" value="F:arsenate reductase (thioredoxin) activity"/>
    <property type="evidence" value="ECO:0007669"/>
    <property type="project" value="UniProtKB-UniRule"/>
</dbReference>
<dbReference type="GO" id="GO:0004725">
    <property type="term" value="F:protein tyrosine phosphatase activity"/>
    <property type="evidence" value="ECO:0007669"/>
    <property type="project" value="InterPro"/>
</dbReference>
<dbReference type="GO" id="GO:0046685">
    <property type="term" value="P:response to arsenic-containing substance"/>
    <property type="evidence" value="ECO:0007669"/>
    <property type="project" value="UniProtKB-KW"/>
</dbReference>
<dbReference type="CDD" id="cd16345">
    <property type="entry name" value="LMWP_ArsC"/>
    <property type="match status" value="1"/>
</dbReference>
<dbReference type="FunFam" id="3.40.50.2300:FF:000237">
    <property type="entry name" value="Arsenate reductase"/>
    <property type="match status" value="1"/>
</dbReference>
<dbReference type="Gene3D" id="3.40.50.2300">
    <property type="match status" value="1"/>
</dbReference>
<dbReference type="HAMAP" id="MF_01624">
    <property type="entry name" value="Arsenate_reduct"/>
    <property type="match status" value="1"/>
</dbReference>
<dbReference type="InterPro" id="IPR014064">
    <property type="entry name" value="Arsenate_reductase_ArsC"/>
</dbReference>
<dbReference type="InterPro" id="IPR023485">
    <property type="entry name" value="Ptyr_pPase"/>
</dbReference>
<dbReference type="InterPro" id="IPR036196">
    <property type="entry name" value="Ptyr_pPase_sf"/>
</dbReference>
<dbReference type="NCBIfam" id="TIGR02691">
    <property type="entry name" value="arsC_pI258_fam"/>
    <property type="match status" value="1"/>
</dbReference>
<dbReference type="NCBIfam" id="NF010053">
    <property type="entry name" value="PRK13530.1"/>
    <property type="match status" value="1"/>
</dbReference>
<dbReference type="PANTHER" id="PTHR43428">
    <property type="entry name" value="ARSENATE REDUCTASE"/>
    <property type="match status" value="1"/>
</dbReference>
<dbReference type="PANTHER" id="PTHR43428:SF1">
    <property type="entry name" value="ARSENATE REDUCTASE"/>
    <property type="match status" value="1"/>
</dbReference>
<dbReference type="Pfam" id="PF01451">
    <property type="entry name" value="LMWPc"/>
    <property type="match status" value="1"/>
</dbReference>
<dbReference type="SMART" id="SM00226">
    <property type="entry name" value="LMWPc"/>
    <property type="match status" value="1"/>
</dbReference>
<dbReference type="SUPFAM" id="SSF52788">
    <property type="entry name" value="Phosphotyrosine protein phosphatases I"/>
    <property type="match status" value="1"/>
</dbReference>
<proteinExistence type="inferred from homology"/>
<sequence>MTKKTIYFICTGNSCRSQMAEGWAKQILADDWNVYSAGIETHGVNPKAIEAMKEVGIDISNHTSDLIDNNIIKNSNLVVTLCSDADVNCPSLPTNVKKEHWGFDDPAGKPWSEFQRVRDEIKIAIENFKSR</sequence>
<reference key="1">
    <citation type="journal article" date="2007" name="BMC Microbiol.">
        <title>Subtle genetic changes enhance virulence of methicillin resistant and sensitive Staphylococcus aureus.</title>
        <authorList>
            <person name="Highlander S.K."/>
            <person name="Hulten K.G."/>
            <person name="Qin X."/>
            <person name="Jiang H."/>
            <person name="Yerrapragada S."/>
            <person name="Mason E.O. Jr."/>
            <person name="Shang Y."/>
            <person name="Williams T.M."/>
            <person name="Fortunov R.M."/>
            <person name="Liu Y."/>
            <person name="Igboeli O."/>
            <person name="Petrosino J."/>
            <person name="Tirumalai M."/>
            <person name="Uzman A."/>
            <person name="Fox G.E."/>
            <person name="Cardenas A.M."/>
            <person name="Muzny D.M."/>
            <person name="Hemphill L."/>
            <person name="Ding Y."/>
            <person name="Dugan S."/>
            <person name="Blyth P.R."/>
            <person name="Buhay C.J."/>
            <person name="Dinh H.H."/>
            <person name="Hawes A.C."/>
            <person name="Holder M."/>
            <person name="Kovar C.L."/>
            <person name="Lee S.L."/>
            <person name="Liu W."/>
            <person name="Nazareth L.V."/>
            <person name="Wang Q."/>
            <person name="Zhou J."/>
            <person name="Kaplan S.L."/>
            <person name="Weinstock G.M."/>
        </authorList>
    </citation>
    <scope>NUCLEOTIDE SEQUENCE [LARGE SCALE GENOMIC DNA]</scope>
    <source>
        <strain>USA300 / TCH1516</strain>
    </source>
</reference>
<organism>
    <name type="scientific">Staphylococcus aureus (strain USA300 / TCH1516)</name>
    <dbReference type="NCBI Taxonomy" id="451516"/>
    <lineage>
        <taxon>Bacteria</taxon>
        <taxon>Bacillati</taxon>
        <taxon>Bacillota</taxon>
        <taxon>Bacilli</taxon>
        <taxon>Bacillales</taxon>
        <taxon>Staphylococcaceae</taxon>
        <taxon>Staphylococcus</taxon>
    </lineage>
</organism>
<evidence type="ECO:0000255" key="1">
    <source>
        <dbReference type="HAMAP-Rule" id="MF_01624"/>
    </source>
</evidence>
<comment type="function">
    <text evidence="1">Catalyzes the reduction of arsenate [As(V)] to arsenite [As(III)].</text>
</comment>
<comment type="catalytic activity">
    <reaction evidence="1">
        <text>arsenate + [thioredoxin]-dithiol + H(+) = arsenite + [thioredoxin]-disulfide + H2O</text>
        <dbReference type="Rhea" id="RHEA:43848"/>
        <dbReference type="Rhea" id="RHEA-COMP:10698"/>
        <dbReference type="Rhea" id="RHEA-COMP:10700"/>
        <dbReference type="ChEBI" id="CHEBI:15377"/>
        <dbReference type="ChEBI" id="CHEBI:15378"/>
        <dbReference type="ChEBI" id="CHEBI:29242"/>
        <dbReference type="ChEBI" id="CHEBI:29950"/>
        <dbReference type="ChEBI" id="CHEBI:48597"/>
        <dbReference type="ChEBI" id="CHEBI:50058"/>
        <dbReference type="EC" id="1.20.4.4"/>
    </reaction>
</comment>
<comment type="subcellular location">
    <subcellularLocation>
        <location evidence="1">Cytoplasm</location>
    </subcellularLocation>
</comment>
<comment type="similarity">
    <text evidence="1">Belongs to the low molecular weight phosphotyrosine protein phosphatase family. Thioredoxin-coupled ArsC subfamily.</text>
</comment>
<protein>
    <recommendedName>
        <fullName evidence="1">Arsenate reductase</fullName>
        <ecNumber evidence="1">1.20.4.4</ecNumber>
    </recommendedName>
</protein>
<gene>
    <name evidence="1" type="primary">arsC</name>
    <name type="ordered locus">USA300HOU_1764</name>
</gene>
<name>ARSC_STAAT</name>
<accession>A8Z4K0</accession>
<keyword id="KW-0059">Arsenical resistance</keyword>
<keyword id="KW-0963">Cytoplasm</keyword>
<keyword id="KW-1015">Disulfide bond</keyword>
<keyword id="KW-0560">Oxidoreductase</keyword>
<keyword id="KW-0676">Redox-active center</keyword>